<reference key="1">
    <citation type="journal article" date="2005" name="Science">
        <title>The genome of the kinetoplastid parasite, Leishmania major.</title>
        <authorList>
            <person name="Ivens A.C."/>
            <person name="Peacock C.S."/>
            <person name="Worthey E.A."/>
            <person name="Murphy L."/>
            <person name="Aggarwal G."/>
            <person name="Berriman M."/>
            <person name="Sisk E."/>
            <person name="Rajandream M.A."/>
            <person name="Adlem E."/>
            <person name="Aert R."/>
            <person name="Anupama A."/>
            <person name="Apostolou Z."/>
            <person name="Attipoe P."/>
            <person name="Bason N."/>
            <person name="Bauser C."/>
            <person name="Beck A."/>
            <person name="Beverley S.M."/>
            <person name="Bianchettin G."/>
            <person name="Borzym K."/>
            <person name="Bothe G."/>
            <person name="Bruschi C.V."/>
            <person name="Collins M."/>
            <person name="Cadag E."/>
            <person name="Ciarloni L."/>
            <person name="Clayton C."/>
            <person name="Coulson R.M.R."/>
            <person name="Cronin A."/>
            <person name="Cruz A.K."/>
            <person name="Davies R.M."/>
            <person name="De Gaudenzi J."/>
            <person name="Dobson D.E."/>
            <person name="Duesterhoeft A."/>
            <person name="Fazelina G."/>
            <person name="Fosker N."/>
            <person name="Frasch A.C."/>
            <person name="Fraser A."/>
            <person name="Fuchs M."/>
            <person name="Gabel C."/>
            <person name="Goble A."/>
            <person name="Goffeau A."/>
            <person name="Harris D."/>
            <person name="Hertz-Fowler C."/>
            <person name="Hilbert H."/>
            <person name="Horn D."/>
            <person name="Huang Y."/>
            <person name="Klages S."/>
            <person name="Knights A."/>
            <person name="Kube M."/>
            <person name="Larke N."/>
            <person name="Litvin L."/>
            <person name="Lord A."/>
            <person name="Louie T."/>
            <person name="Marra M."/>
            <person name="Masuy D."/>
            <person name="Matthews K."/>
            <person name="Michaeli S."/>
            <person name="Mottram J.C."/>
            <person name="Mueller-Auer S."/>
            <person name="Munden H."/>
            <person name="Nelson S."/>
            <person name="Norbertczak H."/>
            <person name="Oliver K."/>
            <person name="O'neil S."/>
            <person name="Pentony M."/>
            <person name="Pohl T.M."/>
            <person name="Price C."/>
            <person name="Purnelle B."/>
            <person name="Quail M.A."/>
            <person name="Rabbinowitsch E."/>
            <person name="Reinhardt R."/>
            <person name="Rieger M."/>
            <person name="Rinta J."/>
            <person name="Robben J."/>
            <person name="Robertson L."/>
            <person name="Ruiz J.C."/>
            <person name="Rutter S."/>
            <person name="Saunders D."/>
            <person name="Schaefer M."/>
            <person name="Schein J."/>
            <person name="Schwartz D.C."/>
            <person name="Seeger K."/>
            <person name="Seyler A."/>
            <person name="Sharp S."/>
            <person name="Shin H."/>
            <person name="Sivam D."/>
            <person name="Squares R."/>
            <person name="Squares S."/>
            <person name="Tosato V."/>
            <person name="Vogt C."/>
            <person name="Volckaert G."/>
            <person name="Wambutt R."/>
            <person name="Warren T."/>
            <person name="Wedler H."/>
            <person name="Woodward J."/>
            <person name="Zhou S."/>
            <person name="Zimmermann W."/>
            <person name="Smith D.F."/>
            <person name="Blackwell J.M."/>
            <person name="Stuart K.D."/>
            <person name="Barrell B.G."/>
            <person name="Myler P.J."/>
        </authorList>
    </citation>
    <scope>NUCLEOTIDE SEQUENCE [LARGE SCALE GENOMIC DNA]</scope>
    <source>
        <strain>MHOM/IL/81/Friedlin</strain>
    </source>
</reference>
<sequence>MGVDLTGISKKSRVIRHHTYSTNPYIKLLIKLYKFLAKRTSSGFNKVVYQRLIKSRSNRAPISLSRIAVVMKRKAVFTAKSKAAPIAVVVGDVLDDVRMARIPAMRVCALRFSKSARQSIVAAGGECLTFDQLAMIAPTGKNTYLLRGRKSGRESVRHFGASGVPGSHSKPYATNRGKETKRGRRTGRSYKRKAFRHV</sequence>
<evidence type="ECO:0000250" key="1"/>
<evidence type="ECO:0000256" key="2">
    <source>
        <dbReference type="SAM" id="MobiDB-lite"/>
    </source>
</evidence>
<evidence type="ECO:0000305" key="3"/>
<comment type="subcellular location">
    <subcellularLocation>
        <location evidence="1">Cytoplasm</location>
    </subcellularLocation>
</comment>
<comment type="similarity">
    <text evidence="3">Belongs to the eukaryotic ribosomal protein eL18 family.</text>
</comment>
<name>RL18_LEIMA</name>
<keyword id="KW-0002">3D-structure</keyword>
<keyword id="KW-0963">Cytoplasm</keyword>
<keyword id="KW-1185">Reference proteome</keyword>
<keyword id="KW-0687">Ribonucleoprotein</keyword>
<keyword id="KW-0689">Ribosomal protein</keyword>
<feature type="chain" id="PRO_0000291637" description="Large ribosomal subunit protein eL18">
    <location>
        <begin position="1"/>
        <end position="198"/>
    </location>
</feature>
<feature type="region of interest" description="Disordered" evidence="2">
    <location>
        <begin position="157"/>
        <end position="198"/>
    </location>
</feature>
<feature type="compositionally biased region" description="Basic residues" evidence="2">
    <location>
        <begin position="179"/>
        <end position="198"/>
    </location>
</feature>
<protein>
    <recommendedName>
        <fullName evidence="3">Large ribosomal subunit protein eL18</fullName>
    </recommendedName>
    <alternativeName>
        <fullName>60S ribosomal protein L18</fullName>
    </alternativeName>
</protein>
<accession>Q4QG98</accession>
<dbReference type="EMBL" id="FR796409">
    <property type="protein sequence ID" value="CAJ02600.1"/>
    <property type="molecule type" value="Genomic_DNA"/>
</dbReference>
<dbReference type="EMBL" id="FR796432">
    <property type="protein sequence ID" value="CAJ09418.1"/>
    <property type="molecule type" value="Genomic_DNA"/>
</dbReference>
<dbReference type="RefSeq" id="XP_001681800.1">
    <property type="nucleotide sequence ID" value="XM_001681748.1"/>
</dbReference>
<dbReference type="PDB" id="8A3W">
    <property type="method" value="EM"/>
    <property type="resolution" value="2.89 A"/>
    <property type="chains" value="P=1-198"/>
</dbReference>
<dbReference type="PDB" id="8A98">
    <property type="method" value="EM"/>
    <property type="resolution" value="2.46 A"/>
    <property type="chains" value="P=1-198"/>
</dbReference>
<dbReference type="PDB" id="8OVJ">
    <property type="method" value="EM"/>
    <property type="resolution" value="2.40 A"/>
    <property type="chains" value="P=1-198"/>
</dbReference>
<dbReference type="PDB" id="8QHU">
    <property type="method" value="EM"/>
    <property type="resolution" value="2.72 A"/>
    <property type="chains" value="P=1-198"/>
</dbReference>
<dbReference type="PDB" id="8QIE">
    <property type="method" value="EM"/>
    <property type="resolution" value="2.43 A"/>
    <property type="chains" value="P=1-198"/>
</dbReference>
<dbReference type="PDB" id="8RXH">
    <property type="method" value="EM"/>
    <property type="resolution" value="2.93 A"/>
    <property type="chains" value="LP=1-198"/>
</dbReference>
<dbReference type="PDB" id="8RXX">
    <property type="method" value="EM"/>
    <property type="resolution" value="2.97 A"/>
    <property type="chains" value="LP=1-198"/>
</dbReference>
<dbReference type="PDBsum" id="8A3W"/>
<dbReference type="PDBsum" id="8A98"/>
<dbReference type="PDBsum" id="8OVJ"/>
<dbReference type="PDBsum" id="8QHU"/>
<dbReference type="PDBsum" id="8QIE"/>
<dbReference type="PDBsum" id="8RXH"/>
<dbReference type="PDBsum" id="8RXX"/>
<dbReference type="EMDB" id="EMD-15124"/>
<dbReference type="EMDB" id="EMD-15272"/>
<dbReference type="EMDB" id="EMD-17216"/>
<dbReference type="EMDB" id="EMD-18419"/>
<dbReference type="EMDB" id="EMD-18437"/>
<dbReference type="EMDB" id="EMD-19576"/>
<dbReference type="EMDB" id="EMD-19582"/>
<dbReference type="SMR" id="Q4QG98"/>
<dbReference type="FunCoup" id="Q4QG98">
    <property type="interactions" value="408"/>
</dbReference>
<dbReference type="STRING" id="5664.Q4QG98"/>
<dbReference type="EnsemblProtists" id="CAJ02600">
    <property type="protein sequence ID" value="CAJ02600"/>
    <property type="gene ID" value="LMJF_13_0560"/>
</dbReference>
<dbReference type="EnsemblProtists" id="CAJ09418">
    <property type="protein sequence ID" value="CAJ09418"/>
    <property type="gene ID" value="LMJF_36_4510"/>
</dbReference>
<dbReference type="GeneID" id="5650085"/>
<dbReference type="KEGG" id="lma:LMJF_13_0560"/>
<dbReference type="KEGG" id="lma:LMJF_36_4510"/>
<dbReference type="VEuPathDB" id="TriTrypDB:LmjF.13.0560"/>
<dbReference type="VEuPathDB" id="TriTrypDB:LMJFC_360060800"/>
<dbReference type="VEuPathDB" id="TriTrypDB:LMJLV39_130009600"/>
<dbReference type="VEuPathDB" id="TriTrypDB:LMJSD75_360056200"/>
<dbReference type="eggNOG" id="KOG1714">
    <property type="taxonomic scope" value="Eukaryota"/>
</dbReference>
<dbReference type="InParanoid" id="Q4QG98"/>
<dbReference type="OMA" id="IDICHKN"/>
<dbReference type="Proteomes" id="UP000000542">
    <property type="component" value="Chromosome 13"/>
</dbReference>
<dbReference type="Proteomes" id="UP000000542">
    <property type="component" value="Chromosome 36"/>
</dbReference>
<dbReference type="GO" id="GO:0005737">
    <property type="term" value="C:cytoplasm"/>
    <property type="evidence" value="ECO:0000266"/>
    <property type="project" value="GeneDB"/>
</dbReference>
<dbReference type="GO" id="GO:0022625">
    <property type="term" value="C:cytosolic large ribosomal subunit"/>
    <property type="evidence" value="ECO:0000318"/>
    <property type="project" value="GO_Central"/>
</dbReference>
<dbReference type="GO" id="GO:0005730">
    <property type="term" value="C:nucleolus"/>
    <property type="evidence" value="ECO:0000266"/>
    <property type="project" value="GeneDB"/>
</dbReference>
<dbReference type="GO" id="GO:0003723">
    <property type="term" value="F:RNA binding"/>
    <property type="evidence" value="ECO:0000318"/>
    <property type="project" value="GO_Central"/>
</dbReference>
<dbReference type="GO" id="GO:0003735">
    <property type="term" value="F:structural constituent of ribosome"/>
    <property type="evidence" value="ECO:0000318"/>
    <property type="project" value="GO_Central"/>
</dbReference>
<dbReference type="GO" id="GO:0006412">
    <property type="term" value="P:translation"/>
    <property type="evidence" value="ECO:0007669"/>
    <property type="project" value="InterPro"/>
</dbReference>
<dbReference type="FunFam" id="3.100.10.10:FF:000001">
    <property type="entry name" value="60S ribosomal protein L18"/>
    <property type="match status" value="1"/>
</dbReference>
<dbReference type="Gene3D" id="3.100.10.10">
    <property type="match status" value="1"/>
</dbReference>
<dbReference type="InterPro" id="IPR000039">
    <property type="entry name" value="Ribosomal_eL18"/>
</dbReference>
<dbReference type="InterPro" id="IPR021131">
    <property type="entry name" value="Ribosomal_uL15/eL18"/>
</dbReference>
<dbReference type="InterPro" id="IPR036227">
    <property type="entry name" value="Ribosomal_uL15/eL18_sf"/>
</dbReference>
<dbReference type="PANTHER" id="PTHR10934">
    <property type="entry name" value="60S RIBOSOMAL PROTEIN L18"/>
    <property type="match status" value="1"/>
</dbReference>
<dbReference type="PANTHER" id="PTHR10934:SF2">
    <property type="entry name" value="LARGE RIBOSOMAL SUBUNIT PROTEIN EL18"/>
    <property type="match status" value="1"/>
</dbReference>
<dbReference type="Pfam" id="PF17135">
    <property type="entry name" value="Ribosomal_L18"/>
    <property type="match status" value="1"/>
</dbReference>
<dbReference type="SUPFAM" id="SSF52080">
    <property type="entry name" value="Ribosomal proteins L15p and L18e"/>
    <property type="match status" value="1"/>
</dbReference>
<organism>
    <name type="scientific">Leishmania major</name>
    <dbReference type="NCBI Taxonomy" id="5664"/>
    <lineage>
        <taxon>Eukaryota</taxon>
        <taxon>Discoba</taxon>
        <taxon>Euglenozoa</taxon>
        <taxon>Kinetoplastea</taxon>
        <taxon>Metakinetoplastina</taxon>
        <taxon>Trypanosomatida</taxon>
        <taxon>Trypanosomatidae</taxon>
        <taxon>Leishmaniinae</taxon>
        <taxon>Leishmania</taxon>
    </lineage>
</organism>
<gene>
    <name type="primary">RPL18-A</name>
    <name type="ORF">LmjF13.0560</name>
    <name type="ORF">LmjF_13_0560</name>
</gene>
<gene>
    <name type="primary">RPL18-B</name>
    <name type="ORF">LmjF36.4510</name>
    <name type="ORF">LmjF_36_4510</name>
</gene>
<proteinExistence type="evidence at protein level"/>